<keyword id="KW-1003">Cell membrane</keyword>
<keyword id="KW-0328">Glycosyltransferase</keyword>
<keyword id="KW-0460">Magnesium</keyword>
<keyword id="KW-0464">Manganese</keyword>
<keyword id="KW-0472">Membrane</keyword>
<keyword id="KW-1185">Reference proteome</keyword>
<keyword id="KW-0808">Transferase</keyword>
<keyword id="KW-0812">Transmembrane</keyword>
<keyword id="KW-1133">Transmembrane helix</keyword>
<gene>
    <name type="primary">wecA</name>
    <name type="ordered locus">TM_1549</name>
</gene>
<accession>Q9X1N5</accession>
<sequence>MWEAIISFFLTSVLSVFAKKTEFLDRPDSRKSHGRAVPPVGGVSIFLTLLIFERDNPFFLFSIPLFLLGLLDDLFDLSYRIKLAVTALVAVWFSTAVTIEVSIFGARIHPVFFVIWFVGMVNAFNVVDGLDGLLSGISLFSSLMIGERSLAFSIIGFLPWNLPDAKVFLGNSGSFLLGAYLSTASVVFFEGDLGYATLFLGFPFYEIVFSFVRRLVVKKNPFSPDEKHTHHVFSRKIGKWKTLLILVSFSLMFNLLGLSQKFYFIFLYVVLCCVLLFTYCVLQRGNGNLKL</sequence>
<dbReference type="EC" id="2.7.8.33"/>
<dbReference type="EMBL" id="AE000512">
    <property type="protein sequence ID" value="AAD36631.1"/>
    <property type="molecule type" value="Genomic_DNA"/>
</dbReference>
<dbReference type="PIR" id="H72238">
    <property type="entry name" value="H72238"/>
</dbReference>
<dbReference type="RefSeq" id="NP_229349.1">
    <property type="nucleotide sequence ID" value="NC_000853.1"/>
</dbReference>
<dbReference type="RefSeq" id="WP_004081942.1">
    <property type="nucleotide sequence ID" value="NC_000853.1"/>
</dbReference>
<dbReference type="SMR" id="Q9X1N5"/>
<dbReference type="FunCoup" id="Q9X1N5">
    <property type="interactions" value="210"/>
</dbReference>
<dbReference type="STRING" id="243274.TM_1549"/>
<dbReference type="BindingDB" id="Q9X1N5"/>
<dbReference type="ChEMBL" id="CHEMBL1932901"/>
<dbReference type="PaxDb" id="243274-THEMA_06535"/>
<dbReference type="EnsemblBacteria" id="AAD36631">
    <property type="protein sequence ID" value="AAD36631"/>
    <property type="gene ID" value="TM_1549"/>
</dbReference>
<dbReference type="KEGG" id="tma:TM1549"/>
<dbReference type="KEGG" id="tmi:THEMA_06535"/>
<dbReference type="KEGG" id="tmm:Tmari_1557"/>
<dbReference type="KEGG" id="tmw:THMA_1584"/>
<dbReference type="eggNOG" id="COG0472">
    <property type="taxonomic scope" value="Bacteria"/>
</dbReference>
<dbReference type="InParanoid" id="Q9X1N5"/>
<dbReference type="OrthoDB" id="9783652at2"/>
<dbReference type="BRENDA" id="2.7.8.33">
    <property type="organism ID" value="6331"/>
</dbReference>
<dbReference type="UniPathway" id="UPA00963"/>
<dbReference type="Proteomes" id="UP000008183">
    <property type="component" value="Chromosome"/>
</dbReference>
<dbReference type="GO" id="GO:0009276">
    <property type="term" value="C:Gram-negative-bacterium-type cell wall"/>
    <property type="evidence" value="ECO:0000314"/>
    <property type="project" value="UniProtKB"/>
</dbReference>
<dbReference type="GO" id="GO:0005886">
    <property type="term" value="C:plasma membrane"/>
    <property type="evidence" value="ECO:0000318"/>
    <property type="project" value="GO_Central"/>
</dbReference>
<dbReference type="GO" id="GO:0016757">
    <property type="term" value="F:glycosyltransferase activity"/>
    <property type="evidence" value="ECO:0007669"/>
    <property type="project" value="UniProtKB-KW"/>
</dbReference>
<dbReference type="GO" id="GO:0000287">
    <property type="term" value="F:magnesium ion binding"/>
    <property type="evidence" value="ECO:0000314"/>
    <property type="project" value="UniProtKB"/>
</dbReference>
<dbReference type="GO" id="GO:0030145">
    <property type="term" value="F:manganese ion binding"/>
    <property type="evidence" value="ECO:0000314"/>
    <property type="project" value="UniProtKB"/>
</dbReference>
<dbReference type="GO" id="GO:0016780">
    <property type="term" value="F:phosphotransferase activity, for other substituted phosphate groups"/>
    <property type="evidence" value="ECO:0000314"/>
    <property type="project" value="UniProtKB"/>
</dbReference>
<dbReference type="GO" id="GO:0036380">
    <property type="term" value="F:UDP-N-acetylglucosamine-undecaprenyl-phosphate N-acetylglucosaminephosphotransferase activity"/>
    <property type="evidence" value="ECO:0007669"/>
    <property type="project" value="UniProtKB-EC"/>
</dbReference>
<dbReference type="GO" id="GO:0045227">
    <property type="term" value="P:capsule polysaccharide biosynthetic process"/>
    <property type="evidence" value="ECO:0007669"/>
    <property type="project" value="UniProtKB-UniPathway"/>
</dbReference>
<dbReference type="GO" id="GO:0044038">
    <property type="term" value="P:cell wall macromolecule biosynthetic process"/>
    <property type="evidence" value="ECO:0000314"/>
    <property type="project" value="UniProtKB"/>
</dbReference>
<dbReference type="GO" id="GO:0071555">
    <property type="term" value="P:cell wall organization"/>
    <property type="evidence" value="ECO:0000314"/>
    <property type="project" value="UniProtKB"/>
</dbReference>
<dbReference type="GO" id="GO:0009103">
    <property type="term" value="P:lipopolysaccharide biosynthetic process"/>
    <property type="evidence" value="ECO:0000314"/>
    <property type="project" value="UniProtKB"/>
</dbReference>
<dbReference type="CDD" id="cd06853">
    <property type="entry name" value="GT_WecA_like"/>
    <property type="match status" value="1"/>
</dbReference>
<dbReference type="InterPro" id="IPR000715">
    <property type="entry name" value="Glycosyl_transferase_4"/>
</dbReference>
<dbReference type="PANTHER" id="PTHR22926">
    <property type="entry name" value="PHOSPHO-N-ACETYLMURAMOYL-PENTAPEPTIDE-TRANSFERASE"/>
    <property type="match status" value="1"/>
</dbReference>
<dbReference type="PANTHER" id="PTHR22926:SF3">
    <property type="entry name" value="UNDECAPRENYL-PHOSPHATE ALPHA-N-ACETYLGLUCOSAMINYL 1-PHOSPHATE TRANSFERASE"/>
    <property type="match status" value="1"/>
</dbReference>
<dbReference type="Pfam" id="PF00953">
    <property type="entry name" value="Glycos_transf_4"/>
    <property type="match status" value="1"/>
</dbReference>
<evidence type="ECO:0000250" key="1"/>
<evidence type="ECO:0000255" key="2"/>
<evidence type="ECO:0000269" key="3">
    <source>
    </source>
</evidence>
<evidence type="ECO:0000269" key="4">
    <source>
    </source>
</evidence>
<evidence type="ECO:0000305" key="5"/>
<name>WECA_THEMA</name>
<organism>
    <name type="scientific">Thermotoga maritima (strain ATCC 43589 / DSM 3109 / JCM 10099 / NBRC 100826 / MSB8)</name>
    <dbReference type="NCBI Taxonomy" id="243274"/>
    <lineage>
        <taxon>Bacteria</taxon>
        <taxon>Thermotogati</taxon>
        <taxon>Thermotogota</taxon>
        <taxon>Thermotogae</taxon>
        <taxon>Thermotogales</taxon>
        <taxon>Thermotogaceae</taxon>
        <taxon>Thermotoga</taxon>
    </lineage>
</organism>
<comment type="function">
    <text evidence="3">Catalyzes the transfer of the GlcNAc-1-phosphate moiety from UDP-GlcNAc onto the carrier lipid undecaprenyl phosphate (C55-P), yielding GlcNAc-pyrophosphoryl-undecaprenyl (GlcNAc-PP-C55), the lipid intermediate involved in the synthesis of various bacterial cell envelope components. The enzyme is highly active when tested with C35-P, instead of its natural C55-P lipid substrate, suggesting that at least a 35-carbon chain is required for the lipid to be a substrate of WecA.</text>
</comment>
<comment type="catalytic activity">
    <reaction evidence="4">
        <text>di-trans,octa-cis-undecaprenyl phosphate + UDP-N-acetyl-alpha-D-glucosamine = N-acetyl-alpha-D-glucosaminyl-di-trans,octa-cis-undecaprenyl diphosphate + UMP</text>
        <dbReference type="Rhea" id="RHEA:28090"/>
        <dbReference type="ChEBI" id="CHEBI:57705"/>
        <dbReference type="ChEBI" id="CHEBI:57865"/>
        <dbReference type="ChEBI" id="CHEBI:60392"/>
        <dbReference type="ChEBI" id="CHEBI:62959"/>
        <dbReference type="EC" id="2.7.8.33"/>
    </reaction>
</comment>
<comment type="cofactor">
    <cofactor evidence="3">
        <name>Mg(2+)</name>
        <dbReference type="ChEBI" id="CHEBI:18420"/>
    </cofactor>
</comment>
<comment type="cofactor">
    <cofactor evidence="3">
        <name>Mn(2+)</name>
        <dbReference type="ChEBI" id="CHEBI:29035"/>
    </cofactor>
</comment>
<comment type="activity regulation">
    <text evidence="3">Partially inhibited by magnesium at concentration higher than 10 mM and totally inhibited at concentration higher than 250 mM. Also inhibited by tunicamycin, NaCl and KCl.</text>
</comment>
<comment type="biophysicochemical properties">
    <kinetics>
        <KM evidence="3">0.12 mM for C55-P (at pH 8 and at 65 degrees Celsius)</KM>
        <KM evidence="3">0.62 mM for UDP-GlcNAc (at pH 8 and at 65 degrees Celsius)</KM>
    </kinetics>
    <phDependence>
        <text evidence="3">Optimum pH is 8.</text>
    </phDependence>
    <temperatureDependence>
        <text evidence="3">Optimum temperature is 65 degrees Celsius. At 30 degrees Celsius activity is only 7% of the optimal value and at 80 degrees Celsius, the enzyme is totally inactive.</text>
    </temperatureDependence>
</comment>
<comment type="pathway">
    <text>Cell wall biogenesis; cell wall polysaccharide biosynthesis.</text>
</comment>
<comment type="subcellular location">
    <subcellularLocation>
        <location evidence="5">Cell membrane</location>
        <topology evidence="5">Multi-pass membrane protein</topology>
    </subcellularLocation>
</comment>
<comment type="similarity">
    <text evidence="5">Belongs to the glycosyltransferase 4 family. WecA subfamily.</text>
</comment>
<protein>
    <recommendedName>
        <fullName>Undecaprenyl-phosphate alpha-N-acetylglucosaminyl 1-phosphate transferase</fullName>
        <ecNumber>2.7.8.33</ecNumber>
    </recommendedName>
    <alternativeName>
        <fullName>UDP-GlcNAc:undecaprenyl-phosphate GlcNAc-1-phosphate transferase</fullName>
    </alternativeName>
    <alternativeName>
        <fullName>Undecaprenyl-phosphate GlcNAc-1-phosphate transferase</fullName>
    </alternativeName>
</protein>
<proteinExistence type="evidence at protein level"/>
<reference key="1">
    <citation type="journal article" date="1999" name="Nature">
        <title>Evidence for lateral gene transfer between Archaea and Bacteria from genome sequence of Thermotoga maritima.</title>
        <authorList>
            <person name="Nelson K.E."/>
            <person name="Clayton R.A."/>
            <person name="Gill S.R."/>
            <person name="Gwinn M.L."/>
            <person name="Dodson R.J."/>
            <person name="Haft D.H."/>
            <person name="Hickey E.K."/>
            <person name="Peterson J.D."/>
            <person name="Nelson W.C."/>
            <person name="Ketchum K.A."/>
            <person name="McDonald L.A."/>
            <person name="Utterback T.R."/>
            <person name="Malek J.A."/>
            <person name="Linher K.D."/>
            <person name="Garrett M.M."/>
            <person name="Stewart A.M."/>
            <person name="Cotton M.D."/>
            <person name="Pratt M.S."/>
            <person name="Phillips C.A."/>
            <person name="Richardson D.L."/>
            <person name="Heidelberg J.F."/>
            <person name="Sutton G.G."/>
            <person name="Fleischmann R.D."/>
            <person name="Eisen J.A."/>
            <person name="White O."/>
            <person name="Salzberg S.L."/>
            <person name="Smith H.O."/>
            <person name="Venter J.C."/>
            <person name="Fraser C.M."/>
        </authorList>
    </citation>
    <scope>NUCLEOTIDE SEQUENCE [LARGE SCALE GENOMIC DNA]</scope>
    <source>
        <strain>ATCC 43589 / DSM 3109 / JCM 10099 / NBRC 100826 / MSB8</strain>
    </source>
</reference>
<reference key="2">
    <citation type="journal article" date="2008" name="J. Bacteriol.">
        <title>Purification and characterization of the bacterial UDP-GlcNAc:undecaprenyl-phosphate GlcNAc-1-phosphate transferase WecA.</title>
        <authorList>
            <person name="Al-Dabbagh B."/>
            <person name="Mengin-Lecreulx D."/>
            <person name="Bouhss A."/>
        </authorList>
    </citation>
    <scope>FUNCTION AS A TRANSFERASE</scope>
    <scope>COFACTOR</scope>
    <scope>ACTIVITY REGULATION</scope>
    <scope>SUBSTRATE SPECIFICITY</scope>
    <scope>BIOPHYSICOCHEMICAL PROPERTIES</scope>
</reference>
<reference key="3">
    <citation type="journal article" date="2009" name="Anal. Biochem.">
        <title>Preparative enzymatic synthesis of polyprenyl-pyrophosphoryl-Nacetylglucosamine, an essential lipid intermediate for the biosynthesis of various bacterial cell envelope polymers.</title>
        <authorList>
            <person name="Al-Dabbagh B."/>
            <person name="Blanot D."/>
            <person name="Mengin-Lecreulx D."/>
            <person name="Bouhss A."/>
        </authorList>
    </citation>
    <scope>CATALYTIC ACTIVITY</scope>
</reference>
<feature type="chain" id="PRO_0000395353" description="Undecaprenyl-phosphate alpha-N-acetylglucosaminyl 1-phosphate transferase">
    <location>
        <begin position="1"/>
        <end position="291"/>
    </location>
</feature>
<feature type="transmembrane region" description="Helical" evidence="2">
    <location>
        <begin position="4"/>
        <end position="24"/>
    </location>
</feature>
<feature type="transmembrane region" description="Helical" evidence="2">
    <location>
        <begin position="32"/>
        <end position="52"/>
    </location>
</feature>
<feature type="transmembrane region" description="Helical" evidence="2">
    <location>
        <begin position="57"/>
        <end position="77"/>
    </location>
</feature>
<feature type="transmembrane region" description="Helical" evidence="2">
    <location>
        <begin position="84"/>
        <end position="104"/>
    </location>
</feature>
<feature type="transmembrane region" description="Helical" evidence="2">
    <location>
        <begin position="110"/>
        <end position="130"/>
    </location>
</feature>
<feature type="transmembrane region" description="Helical" evidence="2">
    <location>
        <begin position="138"/>
        <end position="160"/>
    </location>
</feature>
<feature type="transmembrane region" description="Helical" evidence="2">
    <location>
        <begin position="167"/>
        <end position="189"/>
    </location>
</feature>
<feature type="transmembrane region" description="Helical" evidence="2">
    <location>
        <begin position="194"/>
        <end position="216"/>
    </location>
</feature>
<feature type="transmembrane region" description="Helical" evidence="2">
    <location>
        <begin position="237"/>
        <end position="257"/>
    </location>
</feature>
<feature type="transmembrane region" description="Helical" evidence="2">
    <location>
        <begin position="262"/>
        <end position="282"/>
    </location>
</feature>
<feature type="site" description="Important in orienting the substrate" evidence="1">
    <location>
        <position position="72"/>
    </location>
</feature>
<feature type="site" description="Important in orienting the substrate; probably interacts with magnesium or manganese" evidence="1">
    <location>
        <position position="73"/>
    </location>
</feature>
<feature type="site" description="Could be required for catalysis" evidence="1">
    <location>
        <position position="128"/>
    </location>
</feature>
<feature type="site" description="Could be required for catalysis" evidence="1">
    <location>
        <position position="131"/>
    </location>
</feature>